<keyword id="KW-0002">3D-structure</keyword>
<keyword id="KW-0150">Chloroplast</keyword>
<keyword id="KW-0413">Isomerase</keyword>
<keyword id="KW-0460">Magnesium</keyword>
<keyword id="KW-0479">Metal-binding</keyword>
<keyword id="KW-0934">Plastid</keyword>
<keyword id="KW-1185">Reference proteome</keyword>
<keyword id="KW-0809">Transit peptide</keyword>
<protein>
    <recommendedName>
        <fullName>Ent-copalyl diphosphate synthase, chloroplastic</fullName>
        <shortName evidence="7">AtCPS</shortName>
        <shortName>Ent-CDP synthase</shortName>
        <ecNumber evidence="4 5">5.5.1.13</ecNumber>
    </recommendedName>
    <alternativeName>
        <fullName>Ent-kaurene synthase A</fullName>
        <shortName>KSA</shortName>
    </alternativeName>
    <alternativeName>
        <fullName>Protein GA REQUIRING 1</fullName>
    </alternativeName>
</protein>
<proteinExistence type="evidence at protein level"/>
<feature type="transit peptide" description="Chloroplast" evidence="2">
    <location>
        <begin position="1"/>
        <end position="60"/>
    </location>
</feature>
<feature type="chain" id="PRO_0000033623" description="Ent-copalyl diphosphate synthase, chloroplastic">
    <location>
        <begin position="61"/>
        <end position="802"/>
    </location>
</feature>
<feature type="short sequence motif" description="DXDD motif">
    <location>
        <begin position="377"/>
        <end position="380"/>
    </location>
</feature>
<feature type="binding site" evidence="6 10">
    <location>
        <position position="245"/>
    </location>
    <ligand>
        <name>substrate</name>
    </ligand>
</feature>
<feature type="binding site" evidence="1">
    <location>
        <position position="377"/>
    </location>
    <ligand>
        <name>Mg(2+)</name>
        <dbReference type="ChEBI" id="CHEBI:18420"/>
    </ligand>
</feature>
<feature type="binding site" evidence="1">
    <location>
        <position position="379"/>
    </location>
    <ligand>
        <name>Mg(2+)</name>
        <dbReference type="ChEBI" id="CHEBI:18420"/>
    </ligand>
</feature>
<feature type="binding site" evidence="6 10">
    <location>
        <position position="463"/>
    </location>
    <ligand>
        <name>substrate</name>
    </ligand>
</feature>
<feature type="mutagenesis site" description="Reduced activity, but no effect on substrate binding. Increased inhibition by Mg(2+)." evidence="5">
    <original>H</original>
    <variation>A</variation>
    <location>
        <position position="331"/>
    </location>
</feature>
<feature type="mutagenesis site" description="Reduced catalytic activity, but loss of inhibition by Mg(2+)." evidence="5">
    <original>H</original>
    <variation>R</variation>
    <location>
        <position position="331"/>
    </location>
</feature>
<feature type="mutagenesis site" description="Reduced catalytic activity, but no effect on substrate binding. Reduced inhibition by Mg(2+)." evidence="5">
    <original>D</original>
    <variation>A</variation>
    <location>
        <position position="377"/>
    </location>
</feature>
<feature type="mutagenesis site" description="Loss of function." evidence="4">
    <original>D</original>
    <variation>A</variation>
    <location>
        <position position="379"/>
    </location>
</feature>
<feature type="mutagenesis site" description="Strongly reduced activity. Reduced inhibition by Mg(2+)." evidence="4">
    <original>D</original>
    <variation>A</variation>
    <location>
        <position position="380"/>
    </location>
</feature>
<feature type="helix" evidence="13">
    <location>
        <begin position="92"/>
        <end position="106"/>
    </location>
</feature>
<feature type="helix" evidence="13">
    <location>
        <begin position="117"/>
        <end position="124"/>
    </location>
</feature>
<feature type="strand" evidence="13">
    <location>
        <begin position="129"/>
        <end position="134"/>
    </location>
</feature>
<feature type="helix" evidence="13">
    <location>
        <begin position="136"/>
        <end position="145"/>
    </location>
</feature>
<feature type="strand" evidence="13">
    <location>
        <begin position="155"/>
        <end position="157"/>
    </location>
</feature>
<feature type="helix" evidence="13">
    <location>
        <begin position="160"/>
        <end position="176"/>
    </location>
</feature>
<feature type="helix" evidence="13">
    <location>
        <begin position="181"/>
        <end position="194"/>
    </location>
</feature>
<feature type="helix" evidence="13">
    <location>
        <begin position="195"/>
        <end position="197"/>
    </location>
</feature>
<feature type="helix" evidence="12">
    <location>
        <begin position="203"/>
        <end position="205"/>
    </location>
</feature>
<feature type="helix" evidence="13">
    <location>
        <begin position="210"/>
        <end position="223"/>
    </location>
</feature>
<feature type="turn" evidence="12">
    <location>
        <begin position="232"/>
        <end position="234"/>
    </location>
</feature>
<feature type="helix" evidence="13">
    <location>
        <begin position="235"/>
        <end position="248"/>
    </location>
</feature>
<feature type="helix" evidence="13">
    <location>
        <begin position="251"/>
        <end position="254"/>
    </location>
</feature>
<feature type="helix" evidence="13">
    <location>
        <begin position="260"/>
        <end position="267"/>
    </location>
</feature>
<feature type="helix" evidence="13">
    <location>
        <begin position="273"/>
        <end position="276"/>
    </location>
</feature>
<feature type="helix" evidence="13">
    <location>
        <begin position="277"/>
        <end position="279"/>
    </location>
</feature>
<feature type="strand" evidence="11">
    <location>
        <begin position="284"/>
        <end position="286"/>
    </location>
</feature>
<feature type="helix" evidence="13">
    <location>
        <begin position="290"/>
        <end position="300"/>
    </location>
</feature>
<feature type="helix" evidence="13">
    <location>
        <begin position="303"/>
        <end position="315"/>
    </location>
</feature>
<feature type="turn" evidence="13">
    <location>
        <begin position="316"/>
        <end position="318"/>
    </location>
</feature>
<feature type="strand" evidence="12">
    <location>
        <begin position="322"/>
        <end position="324"/>
    </location>
</feature>
<feature type="helix" evidence="13">
    <location>
        <begin position="327"/>
        <end position="340"/>
    </location>
</feature>
<feature type="helix" evidence="13">
    <location>
        <begin position="344"/>
        <end position="347"/>
    </location>
</feature>
<feature type="helix" evidence="13">
    <location>
        <begin position="348"/>
        <end position="361"/>
    </location>
</feature>
<feature type="strand" evidence="13">
    <location>
        <begin position="369"/>
        <end position="372"/>
    </location>
</feature>
<feature type="helix" evidence="13">
    <location>
        <begin position="378"/>
        <end position="390"/>
    </location>
</feature>
<feature type="helix" evidence="13">
    <location>
        <begin position="397"/>
        <end position="403"/>
    </location>
</feature>
<feature type="helix" evidence="13">
    <location>
        <begin position="420"/>
        <end position="430"/>
    </location>
</feature>
<feature type="helix" evidence="13">
    <location>
        <begin position="438"/>
        <end position="456"/>
    </location>
</feature>
<feature type="strand" evidence="13">
    <location>
        <begin position="463"/>
        <end position="466"/>
    </location>
</feature>
<feature type="helix" evidence="13">
    <location>
        <begin position="470"/>
        <end position="479"/>
    </location>
</feature>
<feature type="helix" evidence="13">
    <location>
        <begin position="482"/>
        <end position="484"/>
    </location>
</feature>
<feature type="helix" evidence="13">
    <location>
        <begin position="487"/>
        <end position="497"/>
    </location>
</feature>
<feature type="helix" evidence="13">
    <location>
        <begin position="500"/>
        <end position="502"/>
    </location>
</feature>
<feature type="strand" evidence="13">
    <location>
        <begin position="504"/>
        <end position="511"/>
    </location>
</feature>
<feature type="turn" evidence="13">
    <location>
        <begin position="514"/>
        <end position="516"/>
    </location>
</feature>
<feature type="helix" evidence="13">
    <location>
        <begin position="519"/>
        <end position="549"/>
    </location>
</feature>
<feature type="helix" evidence="13">
    <location>
        <begin position="552"/>
        <end position="555"/>
    </location>
</feature>
<feature type="helix" evidence="13">
    <location>
        <begin position="559"/>
        <end position="570"/>
    </location>
</feature>
<feature type="helix" evidence="13">
    <location>
        <begin position="576"/>
        <end position="578"/>
    </location>
</feature>
<feature type="helix" evidence="13">
    <location>
        <begin position="579"/>
        <end position="599"/>
    </location>
</feature>
<feature type="helix" evidence="13">
    <location>
        <begin position="603"/>
        <end position="615"/>
    </location>
</feature>
<feature type="helix" evidence="13">
    <location>
        <begin position="640"/>
        <end position="664"/>
    </location>
</feature>
<feature type="helix" evidence="13">
    <location>
        <begin position="669"/>
        <end position="685"/>
    </location>
</feature>
<feature type="strand" evidence="12">
    <location>
        <begin position="686"/>
        <end position="688"/>
    </location>
</feature>
<feature type="helix" evidence="13">
    <location>
        <begin position="691"/>
        <end position="701"/>
    </location>
</feature>
<feature type="strand" evidence="13">
    <location>
        <begin position="703"/>
        <end position="705"/>
    </location>
</feature>
<feature type="helix" evidence="13">
    <location>
        <begin position="708"/>
        <end position="712"/>
    </location>
</feature>
<feature type="helix" evidence="13">
    <location>
        <begin position="714"/>
        <end position="726"/>
    </location>
</feature>
<feature type="helix" evidence="13">
    <location>
        <begin position="742"/>
        <end position="760"/>
    </location>
</feature>
<feature type="turn" evidence="13">
    <location>
        <begin position="764"/>
        <end position="766"/>
    </location>
</feature>
<feature type="helix" evidence="13">
    <location>
        <begin position="767"/>
        <end position="786"/>
    </location>
</feature>
<feature type="helix" evidence="13">
    <location>
        <begin position="791"/>
        <end position="799"/>
    </location>
</feature>
<dbReference type="EC" id="5.5.1.13" evidence="4 5"/>
<dbReference type="EMBL" id="U11034">
    <property type="protein sequence ID" value="AAA53632.1"/>
    <property type="molecule type" value="mRNA"/>
</dbReference>
<dbReference type="EMBL" id="AC004044">
    <property type="protein sequence ID" value="AAD15334.1"/>
    <property type="molecule type" value="Genomic_DNA"/>
</dbReference>
<dbReference type="EMBL" id="AL161495">
    <property type="protein sequence ID" value="CAB77763.1"/>
    <property type="molecule type" value="Genomic_DNA"/>
</dbReference>
<dbReference type="EMBL" id="CP002687">
    <property type="protein sequence ID" value="AEE82229.1"/>
    <property type="molecule type" value="Genomic_DNA"/>
</dbReference>
<dbReference type="PIR" id="D85035">
    <property type="entry name" value="D85035"/>
</dbReference>
<dbReference type="RefSeq" id="NP_192187.1">
    <property type="nucleotide sequence ID" value="NM_116512.2"/>
</dbReference>
<dbReference type="PDB" id="3PYA">
    <property type="method" value="X-ray"/>
    <property type="resolution" value="2.25 A"/>
    <property type="chains" value="A=85-802"/>
</dbReference>
<dbReference type="PDB" id="3PYB">
    <property type="method" value="X-ray"/>
    <property type="resolution" value="2.76 A"/>
    <property type="chains" value="A/B/C=85-802"/>
</dbReference>
<dbReference type="PDB" id="4LIX">
    <property type="method" value="X-ray"/>
    <property type="resolution" value="1.55 A"/>
    <property type="chains" value="A=85-802"/>
</dbReference>
<dbReference type="PDBsum" id="3PYA"/>
<dbReference type="PDBsum" id="3PYB"/>
<dbReference type="PDBsum" id="4LIX"/>
<dbReference type="SMR" id="Q38802"/>
<dbReference type="FunCoup" id="Q38802">
    <property type="interactions" value="49"/>
</dbReference>
<dbReference type="STRING" id="3702.Q38802"/>
<dbReference type="iPTMnet" id="Q38802"/>
<dbReference type="PaxDb" id="3702-AT4G02780.1"/>
<dbReference type="EnsemblPlants" id="AT4G02780.1">
    <property type="protein sequence ID" value="AT4G02780.1"/>
    <property type="gene ID" value="AT4G02780"/>
</dbReference>
<dbReference type="GeneID" id="828182"/>
<dbReference type="Gramene" id="AT4G02780.1">
    <property type="protein sequence ID" value="AT4G02780.1"/>
    <property type="gene ID" value="AT4G02780"/>
</dbReference>
<dbReference type="KEGG" id="ath:AT4G02780"/>
<dbReference type="Araport" id="AT4G02780"/>
<dbReference type="TAIR" id="AT4G02780">
    <property type="gene designation" value="GA1"/>
</dbReference>
<dbReference type="eggNOG" id="ENOG502QQN6">
    <property type="taxonomic scope" value="Eukaryota"/>
</dbReference>
<dbReference type="HOGENOM" id="CLU_003125_3_2_1"/>
<dbReference type="InParanoid" id="Q38802"/>
<dbReference type="OMA" id="RRIRKWY"/>
<dbReference type="PhylomeDB" id="Q38802"/>
<dbReference type="BioCyc" id="ARA:AT4G02780-MONOMER"/>
<dbReference type="BioCyc" id="MetaCyc:AT4G02780-MONOMER"/>
<dbReference type="BRENDA" id="5.5.1.13">
    <property type="organism ID" value="399"/>
</dbReference>
<dbReference type="UniPathway" id="UPA00390"/>
<dbReference type="EvolutionaryTrace" id="Q38802"/>
<dbReference type="PRO" id="PR:Q38802"/>
<dbReference type="Proteomes" id="UP000006548">
    <property type="component" value="Chromosome 4"/>
</dbReference>
<dbReference type="ExpressionAtlas" id="Q38802">
    <property type="expression patterns" value="baseline and differential"/>
</dbReference>
<dbReference type="GO" id="GO:0009507">
    <property type="term" value="C:chloroplast"/>
    <property type="evidence" value="ECO:0000314"/>
    <property type="project" value="TAIR"/>
</dbReference>
<dbReference type="GO" id="GO:0009905">
    <property type="term" value="F:ent-copalyl diphosphate synthase activity"/>
    <property type="evidence" value="ECO:0000314"/>
    <property type="project" value="TAIR"/>
</dbReference>
<dbReference type="GO" id="GO:0000287">
    <property type="term" value="F:magnesium ion binding"/>
    <property type="evidence" value="ECO:0000314"/>
    <property type="project" value="TAIR"/>
</dbReference>
<dbReference type="GO" id="GO:0010333">
    <property type="term" value="F:terpene synthase activity"/>
    <property type="evidence" value="ECO:0007669"/>
    <property type="project" value="InterPro"/>
</dbReference>
<dbReference type="GO" id="GO:0009740">
    <property type="term" value="P:gibberellic acid mediated signaling pathway"/>
    <property type="evidence" value="ECO:0000304"/>
    <property type="project" value="TAIR"/>
</dbReference>
<dbReference type="GO" id="GO:0009686">
    <property type="term" value="P:gibberellin biosynthetic process"/>
    <property type="evidence" value="ECO:0000314"/>
    <property type="project" value="TAIR"/>
</dbReference>
<dbReference type="CDD" id="cd00684">
    <property type="entry name" value="Terpene_cyclase_plant_C1"/>
    <property type="match status" value="1"/>
</dbReference>
<dbReference type="FunFam" id="1.50.10.160:FF:000001">
    <property type="entry name" value="Ent-copalyl diphosphate synthase"/>
    <property type="match status" value="1"/>
</dbReference>
<dbReference type="FunFam" id="1.10.600.10:FF:000073">
    <property type="entry name" value="Ent-copalyl diphosphate synthase, chloroplastic"/>
    <property type="match status" value="1"/>
</dbReference>
<dbReference type="FunFam" id="1.50.10.130:FF:000002">
    <property type="entry name" value="Ent-copalyl diphosphate synthase, chloroplastic"/>
    <property type="match status" value="1"/>
</dbReference>
<dbReference type="Gene3D" id="1.50.10.160">
    <property type="match status" value="1"/>
</dbReference>
<dbReference type="Gene3D" id="1.10.600.10">
    <property type="entry name" value="Farnesyl Diphosphate Synthase"/>
    <property type="match status" value="1"/>
</dbReference>
<dbReference type="Gene3D" id="1.50.10.130">
    <property type="entry name" value="Terpene synthase, N-terminal domain"/>
    <property type="match status" value="1"/>
</dbReference>
<dbReference type="InterPro" id="IPR008949">
    <property type="entry name" value="Isoprenoid_synthase_dom_sf"/>
</dbReference>
<dbReference type="InterPro" id="IPR044814">
    <property type="entry name" value="Terpene_cyclase_plant_C1"/>
</dbReference>
<dbReference type="InterPro" id="IPR001906">
    <property type="entry name" value="Terpene_synth_N"/>
</dbReference>
<dbReference type="InterPro" id="IPR036965">
    <property type="entry name" value="Terpene_synth_N_sf"/>
</dbReference>
<dbReference type="InterPro" id="IPR050148">
    <property type="entry name" value="Terpene_synthase-like"/>
</dbReference>
<dbReference type="InterPro" id="IPR008930">
    <property type="entry name" value="Terpenoid_cyclase/PrenylTrfase"/>
</dbReference>
<dbReference type="PANTHER" id="PTHR31739">
    <property type="entry name" value="ENT-COPALYL DIPHOSPHATE SYNTHASE, CHLOROPLASTIC"/>
    <property type="match status" value="1"/>
</dbReference>
<dbReference type="PANTHER" id="PTHR31739:SF4">
    <property type="entry name" value="ENT-COPALYL DIPHOSPHATE SYNTHASE, CHLOROPLASTIC"/>
    <property type="match status" value="1"/>
</dbReference>
<dbReference type="Pfam" id="PF01397">
    <property type="entry name" value="Terpene_synth"/>
    <property type="match status" value="1"/>
</dbReference>
<dbReference type="SFLD" id="SFLDG01014">
    <property type="entry name" value="Terpene_Cyclase_Like_1_N-term"/>
    <property type="match status" value="1"/>
</dbReference>
<dbReference type="SFLD" id="SFLDG01605">
    <property type="entry name" value="Terpene_Cyclase_Like_1_N-term"/>
    <property type="match status" value="1"/>
</dbReference>
<dbReference type="SUPFAM" id="SSF48239">
    <property type="entry name" value="Terpenoid cyclases/Protein prenyltransferases"/>
    <property type="match status" value="2"/>
</dbReference>
<dbReference type="SUPFAM" id="SSF48576">
    <property type="entry name" value="Terpenoid synthases"/>
    <property type="match status" value="1"/>
</dbReference>
<reference key="1">
    <citation type="journal article" date="1994" name="Plant Cell">
        <title>The Arabidopsis GA1 locus encodes the cyclase ent-kaurene synthetase A of gibberellin biosynthesis.</title>
        <authorList>
            <person name="Sun T.-P."/>
            <person name="Kamiya Y."/>
        </authorList>
    </citation>
    <scope>NUCLEOTIDE SEQUENCE [GENOMIC DNA / MRNA]</scope>
    <source>
        <strain>cv. Columbia</strain>
    </source>
</reference>
<reference key="2">
    <citation type="journal article" date="1999" name="Nature">
        <title>Sequence and analysis of chromosome 4 of the plant Arabidopsis thaliana.</title>
        <authorList>
            <person name="Mayer K.F.X."/>
            <person name="Schueller C."/>
            <person name="Wambutt R."/>
            <person name="Murphy G."/>
            <person name="Volckaert G."/>
            <person name="Pohl T."/>
            <person name="Duesterhoeft A."/>
            <person name="Stiekema W."/>
            <person name="Entian K.-D."/>
            <person name="Terryn N."/>
            <person name="Harris B."/>
            <person name="Ansorge W."/>
            <person name="Brandt P."/>
            <person name="Grivell L.A."/>
            <person name="Rieger M."/>
            <person name="Weichselgartner M."/>
            <person name="de Simone V."/>
            <person name="Obermaier B."/>
            <person name="Mache R."/>
            <person name="Mueller M."/>
            <person name="Kreis M."/>
            <person name="Delseny M."/>
            <person name="Puigdomenech P."/>
            <person name="Watson M."/>
            <person name="Schmidtheini T."/>
            <person name="Reichert B."/>
            <person name="Portetelle D."/>
            <person name="Perez-Alonso M."/>
            <person name="Boutry M."/>
            <person name="Bancroft I."/>
            <person name="Vos P."/>
            <person name="Hoheisel J."/>
            <person name="Zimmermann W."/>
            <person name="Wedler H."/>
            <person name="Ridley P."/>
            <person name="Langham S.-A."/>
            <person name="McCullagh B."/>
            <person name="Bilham L."/>
            <person name="Robben J."/>
            <person name="van der Schueren J."/>
            <person name="Grymonprez B."/>
            <person name="Chuang Y.-J."/>
            <person name="Vandenbussche F."/>
            <person name="Braeken M."/>
            <person name="Weltjens I."/>
            <person name="Voet M."/>
            <person name="Bastiaens I."/>
            <person name="Aert R."/>
            <person name="Defoor E."/>
            <person name="Weitzenegger T."/>
            <person name="Bothe G."/>
            <person name="Ramsperger U."/>
            <person name="Hilbert H."/>
            <person name="Braun M."/>
            <person name="Holzer E."/>
            <person name="Brandt A."/>
            <person name="Peters S."/>
            <person name="van Staveren M."/>
            <person name="Dirkse W."/>
            <person name="Mooijman P."/>
            <person name="Klein Lankhorst R."/>
            <person name="Rose M."/>
            <person name="Hauf J."/>
            <person name="Koetter P."/>
            <person name="Berneiser S."/>
            <person name="Hempel S."/>
            <person name="Feldpausch M."/>
            <person name="Lamberth S."/>
            <person name="Van den Daele H."/>
            <person name="De Keyser A."/>
            <person name="Buysshaert C."/>
            <person name="Gielen J."/>
            <person name="Villarroel R."/>
            <person name="De Clercq R."/>
            <person name="van Montagu M."/>
            <person name="Rogers J."/>
            <person name="Cronin A."/>
            <person name="Quail M.A."/>
            <person name="Bray-Allen S."/>
            <person name="Clark L."/>
            <person name="Doggett J."/>
            <person name="Hall S."/>
            <person name="Kay M."/>
            <person name="Lennard N."/>
            <person name="McLay K."/>
            <person name="Mayes R."/>
            <person name="Pettett A."/>
            <person name="Rajandream M.A."/>
            <person name="Lyne M."/>
            <person name="Benes V."/>
            <person name="Rechmann S."/>
            <person name="Borkova D."/>
            <person name="Bloecker H."/>
            <person name="Scharfe M."/>
            <person name="Grimm M."/>
            <person name="Loehnert T.-H."/>
            <person name="Dose S."/>
            <person name="de Haan M."/>
            <person name="Maarse A.C."/>
            <person name="Schaefer M."/>
            <person name="Mueller-Auer S."/>
            <person name="Gabel C."/>
            <person name="Fuchs M."/>
            <person name="Fartmann B."/>
            <person name="Granderath K."/>
            <person name="Dauner D."/>
            <person name="Herzl A."/>
            <person name="Neumann S."/>
            <person name="Argiriou A."/>
            <person name="Vitale D."/>
            <person name="Liguori R."/>
            <person name="Piravandi E."/>
            <person name="Massenet O."/>
            <person name="Quigley F."/>
            <person name="Clabauld G."/>
            <person name="Muendlein A."/>
            <person name="Felber R."/>
            <person name="Schnabl S."/>
            <person name="Hiller R."/>
            <person name="Schmidt W."/>
            <person name="Lecharny A."/>
            <person name="Aubourg S."/>
            <person name="Chefdor F."/>
            <person name="Cooke R."/>
            <person name="Berger C."/>
            <person name="Monfort A."/>
            <person name="Casacuberta E."/>
            <person name="Gibbons T."/>
            <person name="Weber N."/>
            <person name="Vandenbol M."/>
            <person name="Bargues M."/>
            <person name="Terol J."/>
            <person name="Torres A."/>
            <person name="Perez-Perez A."/>
            <person name="Purnelle B."/>
            <person name="Bent E."/>
            <person name="Johnson S."/>
            <person name="Tacon D."/>
            <person name="Jesse T."/>
            <person name="Heijnen L."/>
            <person name="Schwarz S."/>
            <person name="Scholler P."/>
            <person name="Heber S."/>
            <person name="Francs P."/>
            <person name="Bielke C."/>
            <person name="Frishman D."/>
            <person name="Haase D."/>
            <person name="Lemcke K."/>
            <person name="Mewes H.-W."/>
            <person name="Stocker S."/>
            <person name="Zaccaria P."/>
            <person name="Bevan M."/>
            <person name="Wilson R.K."/>
            <person name="de la Bastide M."/>
            <person name="Habermann K."/>
            <person name="Parnell L."/>
            <person name="Dedhia N."/>
            <person name="Gnoj L."/>
            <person name="Schutz K."/>
            <person name="Huang E."/>
            <person name="Spiegel L."/>
            <person name="Sekhon M."/>
            <person name="Murray J."/>
            <person name="Sheet P."/>
            <person name="Cordes M."/>
            <person name="Abu-Threideh J."/>
            <person name="Stoneking T."/>
            <person name="Kalicki J."/>
            <person name="Graves T."/>
            <person name="Harmon G."/>
            <person name="Edwards J."/>
            <person name="Latreille P."/>
            <person name="Courtney L."/>
            <person name="Cloud J."/>
            <person name="Abbott A."/>
            <person name="Scott K."/>
            <person name="Johnson D."/>
            <person name="Minx P."/>
            <person name="Bentley D."/>
            <person name="Fulton B."/>
            <person name="Miller N."/>
            <person name="Greco T."/>
            <person name="Kemp K."/>
            <person name="Kramer J."/>
            <person name="Fulton L."/>
            <person name="Mardis E."/>
            <person name="Dante M."/>
            <person name="Pepin K."/>
            <person name="Hillier L.W."/>
            <person name="Nelson J."/>
            <person name="Spieth J."/>
            <person name="Ryan E."/>
            <person name="Andrews S."/>
            <person name="Geisel C."/>
            <person name="Layman D."/>
            <person name="Du H."/>
            <person name="Ali J."/>
            <person name="Berghoff A."/>
            <person name="Jones K."/>
            <person name="Drone K."/>
            <person name="Cotton M."/>
            <person name="Joshu C."/>
            <person name="Antonoiu B."/>
            <person name="Zidanic M."/>
            <person name="Strong C."/>
            <person name="Sun H."/>
            <person name="Lamar B."/>
            <person name="Yordan C."/>
            <person name="Ma P."/>
            <person name="Zhong J."/>
            <person name="Preston R."/>
            <person name="Vil D."/>
            <person name="Shekher M."/>
            <person name="Matero A."/>
            <person name="Shah R."/>
            <person name="Swaby I.K."/>
            <person name="O'Shaughnessy A."/>
            <person name="Rodriguez M."/>
            <person name="Hoffman J."/>
            <person name="Till S."/>
            <person name="Granat S."/>
            <person name="Shohdy N."/>
            <person name="Hasegawa A."/>
            <person name="Hameed A."/>
            <person name="Lodhi M."/>
            <person name="Johnson A."/>
            <person name="Chen E."/>
            <person name="Marra M.A."/>
            <person name="Martienssen R."/>
            <person name="McCombie W.R."/>
        </authorList>
    </citation>
    <scope>NUCLEOTIDE SEQUENCE [LARGE SCALE GENOMIC DNA]</scope>
    <source>
        <strain>cv. Columbia</strain>
    </source>
</reference>
<reference key="3">
    <citation type="journal article" date="2017" name="Plant J.">
        <title>Araport11: a complete reannotation of the Arabidopsis thaliana reference genome.</title>
        <authorList>
            <person name="Cheng C.Y."/>
            <person name="Krishnakumar V."/>
            <person name="Chan A.P."/>
            <person name="Thibaud-Nissen F."/>
            <person name="Schobel S."/>
            <person name="Town C.D."/>
        </authorList>
    </citation>
    <scope>GENOME REANNOTATION</scope>
    <source>
        <strain>cv. Columbia</strain>
    </source>
</reference>
<reference key="4">
    <citation type="journal article" date="2002" name="Mol. Genet. Genomics">
        <title>Genomic analysis of the terpenoid synthase (AtTPS) gene family of Arabidopsis thaliana.</title>
        <authorList>
            <person name="Aubourg S."/>
            <person name="Lecharny A."/>
            <person name="Bohlmann J."/>
        </authorList>
    </citation>
    <scope>GENE FAMILY</scope>
    <scope>NOMENCLATURE</scope>
</reference>
<reference key="5">
    <citation type="journal article" date="2003" name="Plant Cell">
        <title>Biosynthesis and emission of terpenoid volatiles from Arabidopsis flowers.</title>
        <authorList>
            <person name="Chen F."/>
            <person name="Tholl D."/>
            <person name="D'Auria J.C."/>
            <person name="Farooq A."/>
            <person name="Pichersky E."/>
            <person name="Gershenzon J."/>
        </authorList>
    </citation>
    <scope>TISSUE SPECIFICITY</scope>
</reference>
<reference key="6">
    <citation type="journal article" date="2003" name="Plant Mol. Biol.">
        <title>Genome organization in Arabidopsis thaliana: a survey for genes involved in isoprenoid and chlorophyll metabolism.</title>
        <authorList>
            <person name="Lange B.M."/>
            <person name="Ghassemian M."/>
        </authorList>
    </citation>
    <scope>GENE FAMILY</scope>
</reference>
<reference key="7">
    <citation type="journal article" date="2007" name="ChemBioChem">
        <title>Probing the role of the DXDD motif in Class II diterpene cyclases.</title>
        <authorList>
            <person name="Prisic S."/>
            <person name="Xu J."/>
            <person name="Coates R.M."/>
            <person name="Peters R.J."/>
        </authorList>
    </citation>
    <scope>FUNCTION</scope>
    <scope>CATALYTIC ACTIVITY</scope>
    <scope>BIOPHYSICOCHEMICAL PROPERTIES</scope>
    <scope>PATHWAY</scope>
    <scope>MUTAGENESIS OF ASP-379 AND ASP-380</scope>
</reference>
<reference key="8">
    <citation type="journal article" date="2010" name="J. Biol. Chem.">
        <title>A single residue switch for Mg(2+)-dependent inhibition characterizes plant class II diterpene cyclases from primary and secondary metabolism.</title>
        <authorList>
            <person name="Mann F.M."/>
            <person name="Prisic S."/>
            <person name="Davenport E.K."/>
            <person name="Determan M.K."/>
            <person name="Coates R.M."/>
            <person name="Peters R.J."/>
        </authorList>
    </citation>
    <scope>FUNCTION</scope>
    <scope>CATALYTIC ACTIVITY</scope>
    <scope>BIOPHYSICOCHEMICAL PROPERTIES</scope>
    <scope>COFACTOR</scope>
    <scope>ACTIVITY REGULATION</scope>
    <scope>PATHWAY</scope>
    <scope>MUTAGENESIS OF HIS-331 AND ASP-377</scope>
</reference>
<reference key="9">
    <citation type="journal article" date="2011" name="Nat. Chem. Biol.">
        <title>Structure and mechanism of the diterpene cyclase ent-copalyl diphosphate synthase.</title>
        <authorList>
            <person name="Koeksal M."/>
            <person name="Hu H."/>
            <person name="Coates R.M."/>
            <person name="Peters R.J."/>
            <person name="Christianson D.W."/>
        </authorList>
    </citation>
    <scope>X-RAY CRYSTALLOGRAPHY (2.25 ANGSTROMS) OF 85-802 IN COMPLEX WITH SUBSTRATE ANALOGS</scope>
</reference>
<comment type="function">
    <text evidence="4 5 9">Catalyzes the conversion of geranylgeranyl diphosphate to the gibberellin precursor ent-copalyl diphosphate.</text>
</comment>
<comment type="catalytic activity">
    <reaction evidence="4 5">
        <text>(2E,6E,10E)-geranylgeranyl diphosphate = ent-copalyl diphosphate</text>
        <dbReference type="Rhea" id="RHEA:14841"/>
        <dbReference type="ChEBI" id="CHEBI:58553"/>
        <dbReference type="ChEBI" id="CHEBI:58756"/>
        <dbReference type="EC" id="5.5.1.13"/>
    </reaction>
    <physiologicalReaction direction="left-to-right" evidence="4 5">
        <dbReference type="Rhea" id="RHEA:14842"/>
    </physiologicalReaction>
</comment>
<comment type="cofactor">
    <cofactor evidence="5">
        <name>Mg(2+)</name>
        <dbReference type="ChEBI" id="CHEBI:18420"/>
    </cofactor>
</comment>
<comment type="activity regulation">
    <text evidence="5">Inhibited by high concentrations of magnesium.</text>
</comment>
<comment type="biophysicochemical properties">
    <kinetics>
        <KM evidence="4">2.9 uM for GGPP (at pH 7.75 and 30 degrees Celsius)</KM>
        <KM evidence="5">3 uM for GGPP</KM>
    </kinetics>
</comment>
<comment type="pathway">
    <text evidence="4 5">Plant hormone biosynthesis; gibberellin biosynthesis.</text>
</comment>
<comment type="subcellular location">
    <subcellularLocation>
        <location>Plastid</location>
        <location>Chloroplast</location>
    </subcellularLocation>
</comment>
<comment type="tissue specificity">
    <text evidence="3">Expressed in roots, leaves, flowers and also in siliques.</text>
</comment>
<comment type="domain">
    <text>The Asp-Xaa-Asp-Asp (DXDD) motif is important for the catalytic activity through binding to Mg(2+).</text>
</comment>
<comment type="PTM">
    <text>The N-terminus is blocked.</text>
</comment>
<comment type="similarity">
    <text evidence="8">Belongs to the terpene synthase family. Tpsc subfamily.</text>
</comment>
<gene>
    <name type="primary">GA1</name>
    <name type="synonym">ABC33</name>
    <name type="synonym">CPS</name>
    <name type="synonym">CPS1</name>
    <name type="synonym">TPSGA1</name>
    <name type="ordered locus">At4g02780</name>
    <name type="ORF">T5J8.9</name>
</gene>
<organism>
    <name type="scientific">Arabidopsis thaliana</name>
    <name type="common">Mouse-ear cress</name>
    <dbReference type="NCBI Taxonomy" id="3702"/>
    <lineage>
        <taxon>Eukaryota</taxon>
        <taxon>Viridiplantae</taxon>
        <taxon>Streptophyta</taxon>
        <taxon>Embryophyta</taxon>
        <taxon>Tracheophyta</taxon>
        <taxon>Spermatophyta</taxon>
        <taxon>Magnoliopsida</taxon>
        <taxon>eudicotyledons</taxon>
        <taxon>Gunneridae</taxon>
        <taxon>Pentapetalae</taxon>
        <taxon>rosids</taxon>
        <taxon>malvids</taxon>
        <taxon>Brassicales</taxon>
        <taxon>Brassicaceae</taxon>
        <taxon>Camelineae</taxon>
        <taxon>Arabidopsis</taxon>
    </lineage>
</organism>
<name>KSA_ARATH</name>
<evidence type="ECO:0000250" key="1">
    <source>
        <dbReference type="UniProtKB" id="C7BKP9"/>
    </source>
</evidence>
<evidence type="ECO:0000255" key="2"/>
<evidence type="ECO:0000269" key="3">
    <source>
    </source>
</evidence>
<evidence type="ECO:0000269" key="4">
    <source>
    </source>
</evidence>
<evidence type="ECO:0000269" key="5">
    <source>
    </source>
</evidence>
<evidence type="ECO:0000269" key="6">
    <source>
    </source>
</evidence>
<evidence type="ECO:0000303" key="7">
    <source>
    </source>
</evidence>
<evidence type="ECO:0000305" key="8"/>
<evidence type="ECO:0000305" key="9">
    <source>
    </source>
</evidence>
<evidence type="ECO:0007744" key="10">
    <source>
        <dbReference type="PDB" id="3PYA"/>
    </source>
</evidence>
<evidence type="ECO:0007829" key="11">
    <source>
        <dbReference type="PDB" id="3PYA"/>
    </source>
</evidence>
<evidence type="ECO:0007829" key="12">
    <source>
        <dbReference type="PDB" id="3PYB"/>
    </source>
</evidence>
<evidence type="ECO:0007829" key="13">
    <source>
        <dbReference type="PDB" id="4LIX"/>
    </source>
</evidence>
<sequence>MSLQYHVLNSIPSTTFLSSTKTTISSSFLTISGSPLNVARDKSRSGSIHCSKLRTQEYINSQEVQHDLPLIHEWQQLQGEDAPQISVGSNSNAFKEAVKSVKTILRNLTDGEITISAYDTAWVALIDAGDKTPAFPSAVKWIAENQLSDGSWGDAYLFSYHDRLINTLACVVALRSWNLFPHQCNKGITFFRENIGKLEDENDEHMPIGFEVAFPSLLEIARGINIDVPYDSPVLKDIYAKKELKLTRIPKEIMHKIPTTLLHSLEGMRDLDWEKLLKLQSQDGSFLFSPSSTAFAFMQTRDSNCLEYLRNAVKRFNGGVPNVFPVDLFEHIWIVDRLQRLGISRYFEEEIKECLDYVHRYWTDNGICWARCSHVQDIDDTAMAFRLLRQHGYQVSADVFKNFEKEGEFFCFVGQSNQAVTGMFNLYRASQLAFPREEILKNAKEFSYNYLLEKREREELIDKWIIMKDLPGEIGFALEIPWYASLPRVETRFYIDQYGGENDVWIGKTLYRMPYVNNNGYLELAKQDYNNCQAQHQLEWDIFQKWYEENRLSEWGVRRSELLECYYLAAATIFESERSHERMVWAKSSVLVKAISSSFGESSDSRRSFSDQFHEYIANARRSDHHFNDRNMRLDRPGSVQASRLAGVLIGTLNQMSFDLFMSHGRDVNNLLYLSWGDWMEKWKLYGDEGEGELMVKMIILMKNNDLTNFFTHTHFVRLAEIINRICLPRQYLKARRNDEKEKTIKSMEKEMGKMVELALSESDTFRDVSITFLDVAKAFYYFALCGDHLQTHISKVLFQKV</sequence>
<accession>Q38802</accession>